<keyword id="KW-0285">Flavoprotein</keyword>
<keyword id="KW-0288">FMN</keyword>
<keyword id="KW-0560">Oxidoreductase</keyword>
<keyword id="KW-0664">Pyridoxine biosynthesis</keyword>
<keyword id="KW-1185">Reference proteome</keyword>
<sequence>MQSEESIMTDLATSEIPETDPFALFAEWMEEARASELNDPNAMALATATPDGAPSVRMVLLKDHGPQGFTFYTNAESRKGEEIRANAQTALLFHWKSLRRQIRVEGPVREVAPEVADAYFHSRARESQLGAVASDQSRPLEDRRVFVDRFRAAQERFDEGEVERPAYWTGFTVTPQRIEFWCDRPNRLHDRRLFTLSGAGDALSWTSTLLYP</sequence>
<gene>
    <name evidence="1" type="primary">pdxH</name>
    <name type="ordered locus">ELI_13435</name>
</gene>
<protein>
    <recommendedName>
        <fullName evidence="1">Pyridoxine/pyridoxamine 5'-phosphate oxidase</fullName>
        <ecNumber evidence="1">1.4.3.5</ecNumber>
    </recommendedName>
    <alternativeName>
        <fullName evidence="1">PNP/PMP oxidase</fullName>
        <shortName evidence="1">PNPOx</shortName>
    </alternativeName>
    <alternativeName>
        <fullName evidence="1">Pyridoxal 5'-phosphate synthase</fullName>
    </alternativeName>
</protein>
<evidence type="ECO:0000255" key="1">
    <source>
        <dbReference type="HAMAP-Rule" id="MF_01629"/>
    </source>
</evidence>
<dbReference type="EC" id="1.4.3.5" evidence="1"/>
<dbReference type="EMBL" id="CP000157">
    <property type="protein sequence ID" value="ABC64779.1"/>
    <property type="molecule type" value="Genomic_DNA"/>
</dbReference>
<dbReference type="RefSeq" id="WP_011415601.1">
    <property type="nucleotide sequence ID" value="NC_007722.1"/>
</dbReference>
<dbReference type="SMR" id="Q2N6B2"/>
<dbReference type="STRING" id="314225.ELI_13435"/>
<dbReference type="KEGG" id="eli:ELI_13435"/>
<dbReference type="eggNOG" id="COG0259">
    <property type="taxonomic scope" value="Bacteria"/>
</dbReference>
<dbReference type="HOGENOM" id="CLU_032263_2_3_5"/>
<dbReference type="OrthoDB" id="9780392at2"/>
<dbReference type="UniPathway" id="UPA01068">
    <property type="reaction ID" value="UER00304"/>
</dbReference>
<dbReference type="UniPathway" id="UPA01068">
    <property type="reaction ID" value="UER00305"/>
</dbReference>
<dbReference type="Proteomes" id="UP000008808">
    <property type="component" value="Chromosome"/>
</dbReference>
<dbReference type="GO" id="GO:0010181">
    <property type="term" value="F:FMN binding"/>
    <property type="evidence" value="ECO:0007669"/>
    <property type="project" value="UniProtKB-UniRule"/>
</dbReference>
<dbReference type="GO" id="GO:0004733">
    <property type="term" value="F:pyridoxamine phosphate oxidase activity"/>
    <property type="evidence" value="ECO:0007669"/>
    <property type="project" value="UniProtKB-UniRule"/>
</dbReference>
<dbReference type="GO" id="GO:0008615">
    <property type="term" value="P:pyridoxine biosynthetic process"/>
    <property type="evidence" value="ECO:0007669"/>
    <property type="project" value="UniProtKB-KW"/>
</dbReference>
<dbReference type="FunFam" id="2.30.110.10:FF:000020">
    <property type="entry name" value="PNPO isoform 11"/>
    <property type="match status" value="1"/>
</dbReference>
<dbReference type="Gene3D" id="2.30.110.10">
    <property type="entry name" value="Electron Transport, Fmn-binding Protein, Chain A"/>
    <property type="match status" value="1"/>
</dbReference>
<dbReference type="HAMAP" id="MF_01629">
    <property type="entry name" value="PdxH"/>
    <property type="match status" value="1"/>
</dbReference>
<dbReference type="InterPro" id="IPR000659">
    <property type="entry name" value="Pyridox_Oxase"/>
</dbReference>
<dbReference type="InterPro" id="IPR019740">
    <property type="entry name" value="Pyridox_Oxase_CS"/>
</dbReference>
<dbReference type="InterPro" id="IPR011576">
    <property type="entry name" value="Pyridox_Oxase_N"/>
</dbReference>
<dbReference type="InterPro" id="IPR019576">
    <property type="entry name" value="Pyridoxamine_oxidase_dimer_C"/>
</dbReference>
<dbReference type="InterPro" id="IPR012349">
    <property type="entry name" value="Split_barrel_FMN-bd"/>
</dbReference>
<dbReference type="NCBIfam" id="TIGR00558">
    <property type="entry name" value="pdxH"/>
    <property type="match status" value="1"/>
</dbReference>
<dbReference type="NCBIfam" id="NF004231">
    <property type="entry name" value="PRK05679.1"/>
    <property type="match status" value="1"/>
</dbReference>
<dbReference type="PANTHER" id="PTHR10851:SF0">
    <property type="entry name" value="PYRIDOXINE-5'-PHOSPHATE OXIDASE"/>
    <property type="match status" value="1"/>
</dbReference>
<dbReference type="PANTHER" id="PTHR10851">
    <property type="entry name" value="PYRIDOXINE-5-PHOSPHATE OXIDASE"/>
    <property type="match status" value="1"/>
</dbReference>
<dbReference type="Pfam" id="PF10590">
    <property type="entry name" value="PNP_phzG_C"/>
    <property type="match status" value="1"/>
</dbReference>
<dbReference type="Pfam" id="PF01243">
    <property type="entry name" value="PNPOx_N"/>
    <property type="match status" value="1"/>
</dbReference>
<dbReference type="PIRSF" id="PIRSF000190">
    <property type="entry name" value="Pyd_amn-ph_oxd"/>
    <property type="match status" value="1"/>
</dbReference>
<dbReference type="SUPFAM" id="SSF50475">
    <property type="entry name" value="FMN-binding split barrel"/>
    <property type="match status" value="1"/>
</dbReference>
<dbReference type="PROSITE" id="PS01064">
    <property type="entry name" value="PYRIDOX_OXIDASE"/>
    <property type="match status" value="1"/>
</dbReference>
<proteinExistence type="inferred from homology"/>
<organism>
    <name type="scientific">Erythrobacter litoralis (strain HTCC2594)</name>
    <dbReference type="NCBI Taxonomy" id="314225"/>
    <lineage>
        <taxon>Bacteria</taxon>
        <taxon>Pseudomonadati</taxon>
        <taxon>Pseudomonadota</taxon>
        <taxon>Alphaproteobacteria</taxon>
        <taxon>Sphingomonadales</taxon>
        <taxon>Erythrobacteraceae</taxon>
        <taxon>Erythrobacter/Porphyrobacter group</taxon>
        <taxon>Erythrobacter</taxon>
    </lineage>
</organism>
<reference key="1">
    <citation type="journal article" date="2009" name="J. Bacteriol.">
        <title>Complete genome sequence of Erythrobacter litoralis HTCC2594.</title>
        <authorList>
            <person name="Oh H.M."/>
            <person name="Giovannoni S.J."/>
            <person name="Ferriera S."/>
            <person name="Johnson J."/>
            <person name="Cho J.C."/>
        </authorList>
    </citation>
    <scope>NUCLEOTIDE SEQUENCE [LARGE SCALE GENOMIC DNA]</scope>
    <source>
        <strain>HTCC2594</strain>
    </source>
</reference>
<comment type="function">
    <text evidence="1">Catalyzes the oxidation of either pyridoxine 5'-phosphate (PNP) or pyridoxamine 5'-phosphate (PMP) into pyridoxal 5'-phosphate (PLP).</text>
</comment>
<comment type="catalytic activity">
    <reaction evidence="1">
        <text>pyridoxamine 5'-phosphate + O2 + H2O = pyridoxal 5'-phosphate + H2O2 + NH4(+)</text>
        <dbReference type="Rhea" id="RHEA:15817"/>
        <dbReference type="ChEBI" id="CHEBI:15377"/>
        <dbReference type="ChEBI" id="CHEBI:15379"/>
        <dbReference type="ChEBI" id="CHEBI:16240"/>
        <dbReference type="ChEBI" id="CHEBI:28938"/>
        <dbReference type="ChEBI" id="CHEBI:58451"/>
        <dbReference type="ChEBI" id="CHEBI:597326"/>
        <dbReference type="EC" id="1.4.3.5"/>
    </reaction>
</comment>
<comment type="catalytic activity">
    <reaction evidence="1">
        <text>pyridoxine 5'-phosphate + O2 = pyridoxal 5'-phosphate + H2O2</text>
        <dbReference type="Rhea" id="RHEA:15149"/>
        <dbReference type="ChEBI" id="CHEBI:15379"/>
        <dbReference type="ChEBI" id="CHEBI:16240"/>
        <dbReference type="ChEBI" id="CHEBI:58589"/>
        <dbReference type="ChEBI" id="CHEBI:597326"/>
        <dbReference type="EC" id="1.4.3.5"/>
    </reaction>
</comment>
<comment type="cofactor">
    <cofactor evidence="1">
        <name>FMN</name>
        <dbReference type="ChEBI" id="CHEBI:58210"/>
    </cofactor>
    <text evidence="1">Binds 1 FMN per subunit.</text>
</comment>
<comment type="pathway">
    <text evidence="1">Cofactor metabolism; pyridoxal 5'-phosphate salvage; pyridoxal 5'-phosphate from pyridoxamine 5'-phosphate: step 1/1.</text>
</comment>
<comment type="pathway">
    <text evidence="1">Cofactor metabolism; pyridoxal 5'-phosphate salvage; pyridoxal 5'-phosphate from pyridoxine 5'-phosphate: step 1/1.</text>
</comment>
<comment type="subunit">
    <text evidence="1">Homodimer.</text>
</comment>
<comment type="similarity">
    <text evidence="1">Belongs to the pyridoxamine 5'-phosphate oxidase family.</text>
</comment>
<accession>Q2N6B2</accession>
<feature type="chain" id="PRO_0000292291" description="Pyridoxine/pyridoxamine 5'-phosphate oxidase">
    <location>
        <begin position="1"/>
        <end position="212"/>
    </location>
</feature>
<feature type="binding site" evidence="1">
    <location>
        <begin position="57"/>
        <end position="62"/>
    </location>
    <ligand>
        <name>FMN</name>
        <dbReference type="ChEBI" id="CHEBI:58210"/>
    </ligand>
</feature>
<feature type="binding site" evidence="1">
    <location>
        <position position="62"/>
    </location>
    <ligand>
        <name>substrate</name>
    </ligand>
</feature>
<feature type="binding site" evidence="1">
    <location>
        <begin position="72"/>
        <end position="73"/>
    </location>
    <ligand>
        <name>FMN</name>
        <dbReference type="ChEBI" id="CHEBI:58210"/>
    </ligand>
</feature>
<feature type="binding site" evidence="1">
    <location>
        <position position="78"/>
    </location>
    <ligand>
        <name>FMN</name>
        <dbReference type="ChEBI" id="CHEBI:58210"/>
    </ligand>
</feature>
<feature type="binding site" evidence="1">
    <location>
        <position position="79"/>
    </location>
    <ligand>
        <name>FMN</name>
        <dbReference type="ChEBI" id="CHEBI:58210"/>
    </ligand>
</feature>
<feature type="binding site" evidence="1">
    <location>
        <position position="101"/>
    </location>
    <ligand>
        <name>FMN</name>
        <dbReference type="ChEBI" id="CHEBI:58210"/>
    </ligand>
</feature>
<feature type="binding site" evidence="1">
    <location>
        <position position="119"/>
    </location>
    <ligand>
        <name>substrate</name>
    </ligand>
</feature>
<feature type="binding site" evidence="1">
    <location>
        <position position="123"/>
    </location>
    <ligand>
        <name>substrate</name>
    </ligand>
</feature>
<feature type="binding site" evidence="1">
    <location>
        <position position="127"/>
    </location>
    <ligand>
        <name>substrate</name>
    </ligand>
</feature>
<feature type="binding site" evidence="1">
    <location>
        <begin position="136"/>
        <end position="137"/>
    </location>
    <ligand>
        <name>FMN</name>
        <dbReference type="ChEBI" id="CHEBI:58210"/>
    </ligand>
</feature>
<feature type="binding site" evidence="1">
    <location>
        <position position="181"/>
    </location>
    <ligand>
        <name>FMN</name>
        <dbReference type="ChEBI" id="CHEBI:58210"/>
    </ligand>
</feature>
<feature type="binding site" evidence="1">
    <location>
        <begin position="187"/>
        <end position="189"/>
    </location>
    <ligand>
        <name>substrate</name>
    </ligand>
</feature>
<feature type="binding site" evidence="1">
    <location>
        <position position="191"/>
    </location>
    <ligand>
        <name>FMN</name>
        <dbReference type="ChEBI" id="CHEBI:58210"/>
    </ligand>
</feature>
<name>PDXH_ERYLH</name>